<keyword id="KW-0963">Cytoplasm</keyword>
<keyword id="KW-0489">Methyltransferase</keyword>
<keyword id="KW-0949">S-adenosyl-L-methionine</keyword>
<keyword id="KW-0808">Transferase</keyword>
<keyword id="KW-0819">tRNA processing</keyword>
<organism>
    <name type="scientific">Escherichia coli O7:K1 (strain IAI39 / ExPEC)</name>
    <dbReference type="NCBI Taxonomy" id="585057"/>
    <lineage>
        <taxon>Bacteria</taxon>
        <taxon>Pseudomonadati</taxon>
        <taxon>Pseudomonadota</taxon>
        <taxon>Gammaproteobacteria</taxon>
        <taxon>Enterobacterales</taxon>
        <taxon>Enterobacteriaceae</taxon>
        <taxon>Escherichia</taxon>
    </lineage>
</organism>
<proteinExistence type="inferred from homology"/>
<protein>
    <recommendedName>
        <fullName evidence="1">tRNA (guanine-N(1)-)-methyltransferase</fullName>
        <ecNumber evidence="1">2.1.1.228</ecNumber>
    </recommendedName>
    <alternativeName>
        <fullName evidence="1">M1G-methyltransferase</fullName>
    </alternativeName>
    <alternativeName>
        <fullName evidence="1">tRNA [GM37] methyltransferase</fullName>
    </alternativeName>
</protein>
<name>TRMD_ECO7I</name>
<feature type="chain" id="PRO_1000130165" description="tRNA (guanine-N(1)-)-methyltransferase">
    <location>
        <begin position="1"/>
        <end position="255"/>
    </location>
</feature>
<feature type="binding site" evidence="1">
    <location>
        <position position="113"/>
    </location>
    <ligand>
        <name>S-adenosyl-L-methionine</name>
        <dbReference type="ChEBI" id="CHEBI:59789"/>
    </ligand>
</feature>
<feature type="binding site" evidence="1">
    <location>
        <begin position="133"/>
        <end position="138"/>
    </location>
    <ligand>
        <name>S-adenosyl-L-methionine</name>
        <dbReference type="ChEBI" id="CHEBI:59789"/>
    </ligand>
</feature>
<comment type="function">
    <text evidence="1">Specifically methylates guanosine-37 in various tRNAs.</text>
</comment>
<comment type="catalytic activity">
    <reaction evidence="1">
        <text>guanosine(37) in tRNA + S-adenosyl-L-methionine = N(1)-methylguanosine(37) in tRNA + S-adenosyl-L-homocysteine + H(+)</text>
        <dbReference type="Rhea" id="RHEA:36899"/>
        <dbReference type="Rhea" id="RHEA-COMP:10145"/>
        <dbReference type="Rhea" id="RHEA-COMP:10147"/>
        <dbReference type="ChEBI" id="CHEBI:15378"/>
        <dbReference type="ChEBI" id="CHEBI:57856"/>
        <dbReference type="ChEBI" id="CHEBI:59789"/>
        <dbReference type="ChEBI" id="CHEBI:73542"/>
        <dbReference type="ChEBI" id="CHEBI:74269"/>
        <dbReference type="EC" id="2.1.1.228"/>
    </reaction>
</comment>
<comment type="subunit">
    <text evidence="1">Homodimer.</text>
</comment>
<comment type="subcellular location">
    <subcellularLocation>
        <location evidence="1">Cytoplasm</location>
    </subcellularLocation>
</comment>
<comment type="similarity">
    <text evidence="1">Belongs to the RNA methyltransferase TrmD family.</text>
</comment>
<sequence>MWIGIISLFPEMFRAITDYGVTGRAVKNGLLSIQSWSPRDFTHDRHRTVDDRPYGGGPGMLMMVQPLRDAIHAAKAAAGEGAKVIYLSPQGRKLDQAGVSELATNQKLILVCGRYEGIDERVIQTEIDEEWSIGDYVLSGGELPAMTLIDSVSRFIPGVLGHEASATEDSFAEGLLDCPHYTRPEVLEGMEVPPVLLSGNHAEIRRWRLKQSLGRTWLRRPELLENLALTEEQARLLAEFKTEHAQQQHKHDGMA</sequence>
<reference key="1">
    <citation type="journal article" date="2009" name="PLoS Genet.">
        <title>Organised genome dynamics in the Escherichia coli species results in highly diverse adaptive paths.</title>
        <authorList>
            <person name="Touchon M."/>
            <person name="Hoede C."/>
            <person name="Tenaillon O."/>
            <person name="Barbe V."/>
            <person name="Baeriswyl S."/>
            <person name="Bidet P."/>
            <person name="Bingen E."/>
            <person name="Bonacorsi S."/>
            <person name="Bouchier C."/>
            <person name="Bouvet O."/>
            <person name="Calteau A."/>
            <person name="Chiapello H."/>
            <person name="Clermont O."/>
            <person name="Cruveiller S."/>
            <person name="Danchin A."/>
            <person name="Diard M."/>
            <person name="Dossat C."/>
            <person name="Karoui M.E."/>
            <person name="Frapy E."/>
            <person name="Garry L."/>
            <person name="Ghigo J.M."/>
            <person name="Gilles A.M."/>
            <person name="Johnson J."/>
            <person name="Le Bouguenec C."/>
            <person name="Lescat M."/>
            <person name="Mangenot S."/>
            <person name="Martinez-Jehanne V."/>
            <person name="Matic I."/>
            <person name="Nassif X."/>
            <person name="Oztas S."/>
            <person name="Petit M.A."/>
            <person name="Pichon C."/>
            <person name="Rouy Z."/>
            <person name="Ruf C.S."/>
            <person name="Schneider D."/>
            <person name="Tourret J."/>
            <person name="Vacherie B."/>
            <person name="Vallenet D."/>
            <person name="Medigue C."/>
            <person name="Rocha E.P.C."/>
            <person name="Denamur E."/>
        </authorList>
    </citation>
    <scope>NUCLEOTIDE SEQUENCE [LARGE SCALE GENOMIC DNA]</scope>
    <source>
        <strain>IAI39 / ExPEC</strain>
    </source>
</reference>
<gene>
    <name evidence="1" type="primary">trmD</name>
    <name type="ordered locus">ECIAI39_2811</name>
</gene>
<dbReference type="EC" id="2.1.1.228" evidence="1"/>
<dbReference type="EMBL" id="CU928164">
    <property type="protein sequence ID" value="CAR18933.1"/>
    <property type="molecule type" value="Genomic_DNA"/>
</dbReference>
<dbReference type="RefSeq" id="WP_000264777.1">
    <property type="nucleotide sequence ID" value="NC_011750.1"/>
</dbReference>
<dbReference type="RefSeq" id="YP_002408748.1">
    <property type="nucleotide sequence ID" value="NC_011750.1"/>
</dbReference>
<dbReference type="SMR" id="B7NSA6"/>
<dbReference type="STRING" id="585057.ECIAI39_2811"/>
<dbReference type="GeneID" id="93774457"/>
<dbReference type="KEGG" id="ect:ECIAI39_2811"/>
<dbReference type="PATRIC" id="fig|585057.6.peg.2918"/>
<dbReference type="HOGENOM" id="CLU_047363_0_1_6"/>
<dbReference type="Proteomes" id="UP000000749">
    <property type="component" value="Chromosome"/>
</dbReference>
<dbReference type="GO" id="GO:0005829">
    <property type="term" value="C:cytosol"/>
    <property type="evidence" value="ECO:0007669"/>
    <property type="project" value="TreeGrafter"/>
</dbReference>
<dbReference type="GO" id="GO:0052906">
    <property type="term" value="F:tRNA (guanine(37)-N1)-methyltransferase activity"/>
    <property type="evidence" value="ECO:0007669"/>
    <property type="project" value="UniProtKB-UniRule"/>
</dbReference>
<dbReference type="GO" id="GO:0002939">
    <property type="term" value="P:tRNA N1-guanine methylation"/>
    <property type="evidence" value="ECO:0007669"/>
    <property type="project" value="TreeGrafter"/>
</dbReference>
<dbReference type="CDD" id="cd18080">
    <property type="entry name" value="TrmD-like"/>
    <property type="match status" value="1"/>
</dbReference>
<dbReference type="FunFam" id="1.10.1270.20:FF:000001">
    <property type="entry name" value="tRNA (guanine-N(1)-)-methyltransferase"/>
    <property type="match status" value="1"/>
</dbReference>
<dbReference type="FunFam" id="3.40.1280.10:FF:000001">
    <property type="entry name" value="tRNA (guanine-N(1)-)-methyltransferase"/>
    <property type="match status" value="1"/>
</dbReference>
<dbReference type="Gene3D" id="3.40.1280.10">
    <property type="match status" value="1"/>
</dbReference>
<dbReference type="Gene3D" id="1.10.1270.20">
    <property type="entry name" value="tRNA(m1g37)methyltransferase, domain 2"/>
    <property type="match status" value="1"/>
</dbReference>
<dbReference type="HAMAP" id="MF_00605">
    <property type="entry name" value="TrmD"/>
    <property type="match status" value="1"/>
</dbReference>
<dbReference type="InterPro" id="IPR029028">
    <property type="entry name" value="Alpha/beta_knot_MTases"/>
</dbReference>
<dbReference type="InterPro" id="IPR023148">
    <property type="entry name" value="tRNA_m1G_MeTrfase_C_sf"/>
</dbReference>
<dbReference type="InterPro" id="IPR002649">
    <property type="entry name" value="tRNA_m1G_MeTrfase_TrmD"/>
</dbReference>
<dbReference type="InterPro" id="IPR029026">
    <property type="entry name" value="tRNA_m1G_MTases_N"/>
</dbReference>
<dbReference type="InterPro" id="IPR016009">
    <property type="entry name" value="tRNA_MeTrfase_TRMD/TRM10"/>
</dbReference>
<dbReference type="NCBIfam" id="NF000648">
    <property type="entry name" value="PRK00026.1"/>
    <property type="match status" value="1"/>
</dbReference>
<dbReference type="NCBIfam" id="TIGR00088">
    <property type="entry name" value="trmD"/>
    <property type="match status" value="1"/>
</dbReference>
<dbReference type="PANTHER" id="PTHR46417">
    <property type="entry name" value="TRNA (GUANINE-N(1)-)-METHYLTRANSFERASE"/>
    <property type="match status" value="1"/>
</dbReference>
<dbReference type="PANTHER" id="PTHR46417:SF1">
    <property type="entry name" value="TRNA (GUANINE-N(1)-)-METHYLTRANSFERASE"/>
    <property type="match status" value="1"/>
</dbReference>
<dbReference type="Pfam" id="PF01746">
    <property type="entry name" value="tRNA_m1G_MT"/>
    <property type="match status" value="1"/>
</dbReference>
<dbReference type="PIRSF" id="PIRSF000386">
    <property type="entry name" value="tRNA_mtase"/>
    <property type="match status" value="1"/>
</dbReference>
<dbReference type="SUPFAM" id="SSF75217">
    <property type="entry name" value="alpha/beta knot"/>
    <property type="match status" value="1"/>
</dbReference>
<accession>B7NSA6</accession>
<evidence type="ECO:0000255" key="1">
    <source>
        <dbReference type="HAMAP-Rule" id="MF_00605"/>
    </source>
</evidence>